<organism>
    <name type="scientific">Salmonella agona (strain SL483)</name>
    <dbReference type="NCBI Taxonomy" id="454166"/>
    <lineage>
        <taxon>Bacteria</taxon>
        <taxon>Pseudomonadati</taxon>
        <taxon>Pseudomonadota</taxon>
        <taxon>Gammaproteobacteria</taxon>
        <taxon>Enterobacterales</taxon>
        <taxon>Enterobacteriaceae</taxon>
        <taxon>Salmonella</taxon>
    </lineage>
</organism>
<comment type="function">
    <text evidence="1">Proton-coupled chloride transporter. Functions as antiport system and exchanges two chloride ions for 1 proton. Probably acts as an electrical shunt for an outwardly-directed proton pump that is linked to amino acid decarboxylation, as part of the extreme acid resistance (XAR) response.</text>
</comment>
<comment type="catalytic activity">
    <reaction evidence="1">
        <text>2 chloride(in) + H(+)(out) = 2 chloride(out) + H(+)(in)</text>
        <dbReference type="Rhea" id="RHEA:29567"/>
        <dbReference type="ChEBI" id="CHEBI:15378"/>
        <dbReference type="ChEBI" id="CHEBI:17996"/>
    </reaction>
</comment>
<comment type="subunit">
    <text evidence="1">Homodimer.</text>
</comment>
<comment type="subcellular location">
    <subcellularLocation>
        <location evidence="1">Cell inner membrane</location>
        <topology evidence="1">Multi-pass membrane protein</topology>
    </subcellularLocation>
</comment>
<comment type="similarity">
    <text evidence="1">Belongs to the chloride channel (TC 2.A.49) family. ClcA subfamily.</text>
</comment>
<protein>
    <recommendedName>
        <fullName evidence="1">H(+)/Cl(-) exchange transporter ClcA</fullName>
    </recommendedName>
</protein>
<evidence type="ECO:0000255" key="1">
    <source>
        <dbReference type="HAMAP-Rule" id="MF_01128"/>
    </source>
</evidence>
<reference key="1">
    <citation type="journal article" date="2011" name="J. Bacteriol.">
        <title>Comparative genomics of 28 Salmonella enterica isolates: evidence for CRISPR-mediated adaptive sublineage evolution.</title>
        <authorList>
            <person name="Fricke W.F."/>
            <person name="Mammel M.K."/>
            <person name="McDermott P.F."/>
            <person name="Tartera C."/>
            <person name="White D.G."/>
            <person name="Leclerc J.E."/>
            <person name="Ravel J."/>
            <person name="Cebula T.A."/>
        </authorList>
    </citation>
    <scope>NUCLEOTIDE SEQUENCE [LARGE SCALE GENOMIC DNA]</scope>
    <source>
        <strain>SL483</strain>
    </source>
</reference>
<name>CLCA_SALA4</name>
<accession>B5F8R6</accession>
<sequence length="473" mass="50393">MKTDTSTFLAQQIVRLRRRDQIRRLMQRDKTPLAILFMAAVVGTLTGLVGVAFEKAVSWVQNMRIGALVQVADHAFLLWPLAFILSALLAMVGYFLVRKFAPEAGGSGIPEIEGALEELRPVRWWRVLPVKFIGGMGTLGAGMVLGREGPTVQIGGNLGRMVLDVFRMRSAEARHTLLATGAAAGLSAAFNAPLAGILFIIEEMRPQFRYNLISIKAVFTGVIMSSIVFRIFNGEAPIIEVGKLSDAPVNTLWLYLILGIIFGCVGPVFNSLVLRTQDMFQRFHGGEIKKWVLMGGAIGGLCGILGLIEPEAAGGGFNLIPIAAAGNFSVGLLLFIFIARVVTTLLCFSSGAPGGIFAPMLALGTLLGTAFGMAAAVLFPQYHLEAGTFAIAGMGALMAASVRAPLTGIVLVLEMTDNYQLILPMIITCLGATLLAQFLGGKPLYSTILARTLAKQDAEQAAKNQNAPAGENT</sequence>
<dbReference type="EMBL" id="CP001138">
    <property type="protein sequence ID" value="ACH49772.1"/>
    <property type="molecule type" value="Genomic_DNA"/>
</dbReference>
<dbReference type="RefSeq" id="WP_000845428.1">
    <property type="nucleotide sequence ID" value="NC_011149.1"/>
</dbReference>
<dbReference type="SMR" id="B5F8R6"/>
<dbReference type="KEGG" id="sea:SeAg_B0241"/>
<dbReference type="HOGENOM" id="CLU_015263_7_0_6"/>
<dbReference type="Proteomes" id="UP000008819">
    <property type="component" value="Chromosome"/>
</dbReference>
<dbReference type="GO" id="GO:0005886">
    <property type="term" value="C:plasma membrane"/>
    <property type="evidence" value="ECO:0007669"/>
    <property type="project" value="UniProtKB-SubCell"/>
</dbReference>
<dbReference type="GO" id="GO:0015297">
    <property type="term" value="F:antiporter activity"/>
    <property type="evidence" value="ECO:0007669"/>
    <property type="project" value="UniProtKB-UniRule"/>
</dbReference>
<dbReference type="GO" id="GO:0005247">
    <property type="term" value="F:voltage-gated chloride channel activity"/>
    <property type="evidence" value="ECO:0007669"/>
    <property type="project" value="TreeGrafter"/>
</dbReference>
<dbReference type="CDD" id="cd01031">
    <property type="entry name" value="EriC"/>
    <property type="match status" value="1"/>
</dbReference>
<dbReference type="FunFam" id="1.10.3080.10:FF:000005">
    <property type="entry name" value="H(+)/Cl(-) exchange transporter ClcA"/>
    <property type="match status" value="1"/>
</dbReference>
<dbReference type="Gene3D" id="1.10.3080.10">
    <property type="entry name" value="Clc chloride channel"/>
    <property type="match status" value="1"/>
</dbReference>
<dbReference type="HAMAP" id="MF_01128">
    <property type="entry name" value="CLC_ClcA"/>
    <property type="match status" value="1"/>
</dbReference>
<dbReference type="InterPro" id="IPR023861">
    <property type="entry name" value="Cl-channel_ClcA"/>
</dbReference>
<dbReference type="InterPro" id="IPR014743">
    <property type="entry name" value="Cl-channel_core"/>
</dbReference>
<dbReference type="InterPro" id="IPR001807">
    <property type="entry name" value="ClC"/>
</dbReference>
<dbReference type="NCBIfam" id="NF003640">
    <property type="entry name" value="PRK05277.1"/>
    <property type="match status" value="1"/>
</dbReference>
<dbReference type="PANTHER" id="PTHR45711">
    <property type="entry name" value="CHLORIDE CHANNEL PROTEIN"/>
    <property type="match status" value="1"/>
</dbReference>
<dbReference type="PANTHER" id="PTHR45711:SF6">
    <property type="entry name" value="CHLORIDE CHANNEL PROTEIN"/>
    <property type="match status" value="1"/>
</dbReference>
<dbReference type="Pfam" id="PF00654">
    <property type="entry name" value="Voltage_CLC"/>
    <property type="match status" value="1"/>
</dbReference>
<dbReference type="PRINTS" id="PR00762">
    <property type="entry name" value="CLCHANNEL"/>
</dbReference>
<dbReference type="SUPFAM" id="SSF81340">
    <property type="entry name" value="Clc chloride channel"/>
    <property type="match status" value="1"/>
</dbReference>
<gene>
    <name evidence="1" type="primary">clcA</name>
    <name evidence="1" type="synonym">eriC</name>
    <name type="ordered locus">SeAg_B0241</name>
</gene>
<proteinExistence type="inferred from homology"/>
<feature type="chain" id="PRO_1000137303" description="H(+)/Cl(-) exchange transporter ClcA">
    <location>
        <begin position="1"/>
        <end position="473"/>
    </location>
</feature>
<feature type="topological domain" description="Cytoplasmic" evidence="1">
    <location>
        <begin position="1"/>
        <end position="32"/>
    </location>
</feature>
<feature type="transmembrane region" description="Helical" evidence="1">
    <location>
        <begin position="33"/>
        <end position="69"/>
    </location>
</feature>
<feature type="topological domain" description="Periplasmic" evidence="1">
    <location>
        <begin position="70"/>
        <end position="76"/>
    </location>
</feature>
<feature type="transmembrane region" description="Helical" evidence="1">
    <location>
        <begin position="77"/>
        <end position="100"/>
    </location>
</feature>
<feature type="intramembrane region" description="Helical" evidence="1">
    <location>
        <begin position="109"/>
        <end position="116"/>
    </location>
</feature>
<feature type="topological domain" description="Cytoplasmic" evidence="1">
    <location>
        <begin position="117"/>
        <end position="123"/>
    </location>
</feature>
<feature type="transmembrane region" description="Helical" evidence="1">
    <location>
        <begin position="124"/>
        <end position="141"/>
    </location>
</feature>
<feature type="transmembrane region" description="Helical" evidence="1">
    <location>
        <begin position="148"/>
        <end position="166"/>
    </location>
</feature>
<feature type="topological domain" description="Cytoplasmic" evidence="1">
    <location>
        <begin position="167"/>
        <end position="176"/>
    </location>
</feature>
<feature type="intramembrane region" description="Helical" evidence="1">
    <location>
        <begin position="177"/>
        <end position="189"/>
    </location>
</feature>
<feature type="intramembrane region" description="Helical" evidence="1">
    <location>
        <begin position="193"/>
        <end position="201"/>
    </location>
</feature>
<feature type="topological domain" description="Cytoplasmic" evidence="1">
    <location>
        <begin position="202"/>
        <end position="214"/>
    </location>
</feature>
<feature type="transmembrane region" description="Helical" evidence="1">
    <location>
        <begin position="215"/>
        <end position="232"/>
    </location>
</feature>
<feature type="topological domain" description="Periplasmic" evidence="1">
    <location>
        <begin position="233"/>
        <end position="252"/>
    </location>
</feature>
<feature type="transmembrane region" description="Helical" evidence="1">
    <location>
        <begin position="253"/>
        <end position="281"/>
    </location>
</feature>
<feature type="topological domain" description="Cytoplasmic" evidence="1">
    <location>
        <begin position="282"/>
        <end position="287"/>
    </location>
</feature>
<feature type="transmembrane region" description="Helical" evidence="1">
    <location>
        <begin position="288"/>
        <end position="309"/>
    </location>
</feature>
<feature type="topological domain" description="Periplasmic" evidence="1">
    <location>
        <begin position="310"/>
        <end position="329"/>
    </location>
</feature>
<feature type="transmembrane region" description="Helical" evidence="1">
    <location>
        <begin position="330"/>
        <end position="349"/>
    </location>
</feature>
<feature type="transmembrane region" description="Helical" evidence="1">
    <location>
        <begin position="355"/>
        <end position="376"/>
    </location>
</feature>
<feature type="topological domain" description="Periplasmic" evidence="1">
    <location>
        <begin position="377"/>
        <end position="386"/>
    </location>
</feature>
<feature type="intramembrane region" description="Helical" evidence="1">
    <location>
        <begin position="387"/>
        <end position="401"/>
    </location>
</feature>
<feature type="intramembrane region" description="Note=Loop between two helices" evidence="1">
    <location>
        <begin position="402"/>
        <end position="404"/>
    </location>
</feature>
<feature type="intramembrane region" description="Helical" evidence="1">
    <location>
        <begin position="405"/>
        <end position="416"/>
    </location>
</feature>
<feature type="intramembrane region" description="Note=Loop between two helices" evidence="1">
    <location>
        <begin position="417"/>
        <end position="421"/>
    </location>
</feature>
<feature type="transmembrane region" description="Helical" evidence="1">
    <location>
        <begin position="422"/>
        <end position="438"/>
    </location>
</feature>
<feature type="topological domain" description="Cytoplasmic" evidence="1">
    <location>
        <begin position="439"/>
        <end position="473"/>
    </location>
</feature>
<feature type="short sequence motif" description="Selectivity filter part_1" evidence="1">
    <location>
        <begin position="106"/>
        <end position="110"/>
    </location>
</feature>
<feature type="short sequence motif" description="Selectivity filter part_2" evidence="1">
    <location>
        <begin position="146"/>
        <end position="150"/>
    </location>
</feature>
<feature type="short sequence motif" description="Selectivity filter part_3" evidence="1">
    <location>
        <begin position="355"/>
        <end position="359"/>
    </location>
</feature>
<feature type="binding site" evidence="1">
    <location>
        <position position="107"/>
    </location>
    <ligand>
        <name>chloride</name>
        <dbReference type="ChEBI" id="CHEBI:17996"/>
    </ligand>
</feature>
<feature type="binding site" evidence="1">
    <location>
        <position position="356"/>
    </location>
    <ligand>
        <name>chloride</name>
        <dbReference type="ChEBI" id="CHEBI:17996"/>
    </ligand>
</feature>
<feature type="binding site" evidence="1">
    <location>
        <position position="357"/>
    </location>
    <ligand>
        <name>chloride</name>
        <dbReference type="ChEBI" id="CHEBI:17996"/>
    </ligand>
</feature>
<feature type="binding site" evidence="1">
    <location>
        <position position="445"/>
    </location>
    <ligand>
        <name>chloride</name>
        <dbReference type="ChEBI" id="CHEBI:17996"/>
    </ligand>
</feature>
<feature type="site" description="Mediates proton transfer from the outer aqueous phase to the interior of the protein; involved in linking H(+) and Cl(-) transport" evidence="1">
    <location>
        <position position="148"/>
    </location>
</feature>
<feature type="site" description="Mediates proton transfer from the protein to the inner aqueous phase" evidence="1">
    <location>
        <position position="203"/>
    </location>
</feature>
<keyword id="KW-0050">Antiport</keyword>
<keyword id="KW-0997">Cell inner membrane</keyword>
<keyword id="KW-1003">Cell membrane</keyword>
<keyword id="KW-0868">Chloride</keyword>
<keyword id="KW-0406">Ion transport</keyword>
<keyword id="KW-0472">Membrane</keyword>
<keyword id="KW-0812">Transmembrane</keyword>
<keyword id="KW-1133">Transmembrane helix</keyword>
<keyword id="KW-0813">Transport</keyword>